<comment type="function">
    <text evidence="1">Catalyzes the transfer of the enolpyruvyl moiety of phosphoenolpyruvate (PEP) to the 5-hydroxyl of shikimate-3-phosphate (S3P) to produce enolpyruvyl shikimate-3-phosphate and inorganic phosphate.</text>
</comment>
<comment type="catalytic activity">
    <reaction evidence="1">
        <text>3-phosphoshikimate + phosphoenolpyruvate = 5-O-(1-carboxyvinyl)-3-phosphoshikimate + phosphate</text>
        <dbReference type="Rhea" id="RHEA:21256"/>
        <dbReference type="ChEBI" id="CHEBI:43474"/>
        <dbReference type="ChEBI" id="CHEBI:57701"/>
        <dbReference type="ChEBI" id="CHEBI:58702"/>
        <dbReference type="ChEBI" id="CHEBI:145989"/>
        <dbReference type="EC" id="2.5.1.19"/>
    </reaction>
    <physiologicalReaction direction="left-to-right" evidence="1">
        <dbReference type="Rhea" id="RHEA:21257"/>
    </physiologicalReaction>
</comment>
<comment type="pathway">
    <text evidence="1">Metabolic intermediate biosynthesis; chorismate biosynthesis; chorismate from D-erythrose 4-phosphate and phosphoenolpyruvate: step 6/7.</text>
</comment>
<comment type="subunit">
    <text evidence="1">Monomer.</text>
</comment>
<comment type="subcellular location">
    <subcellularLocation>
        <location evidence="1">Cytoplasm</location>
    </subcellularLocation>
</comment>
<comment type="similarity">
    <text evidence="1">Belongs to the EPSP synthase family.</text>
</comment>
<reference key="1">
    <citation type="journal article" date="2006" name="J. Bacteriol.">
        <title>Whole-genome sequence of Listeria welshimeri reveals common steps in genome reduction with Listeria innocua as compared to Listeria monocytogenes.</title>
        <authorList>
            <person name="Hain T."/>
            <person name="Steinweg C."/>
            <person name="Kuenne C.T."/>
            <person name="Billion A."/>
            <person name="Ghai R."/>
            <person name="Chatterjee S.S."/>
            <person name="Domann E."/>
            <person name="Kaerst U."/>
            <person name="Goesmann A."/>
            <person name="Bekel T."/>
            <person name="Bartels D."/>
            <person name="Kaiser O."/>
            <person name="Meyer F."/>
            <person name="Puehler A."/>
            <person name="Weisshaar B."/>
            <person name="Wehland J."/>
            <person name="Liang C."/>
            <person name="Dandekar T."/>
            <person name="Lampidis R."/>
            <person name="Kreft J."/>
            <person name="Goebel W."/>
            <person name="Chakraborty T."/>
        </authorList>
    </citation>
    <scope>NUCLEOTIDE SEQUENCE [LARGE SCALE GENOMIC DNA]</scope>
    <source>
        <strain>ATCC 35897 / DSM 20650 / CCUG 15529 / CIP 8149 / NCTC 11857 / SLCC 5334 / V8</strain>
    </source>
</reference>
<feature type="chain" id="PRO_1000012447" description="3-phosphoshikimate 1-carboxyvinyltransferase">
    <location>
        <begin position="1"/>
        <end position="428"/>
    </location>
</feature>
<feature type="active site" description="Proton acceptor" evidence="1">
    <location>
        <position position="314"/>
    </location>
</feature>
<feature type="binding site" evidence="1">
    <location>
        <position position="20"/>
    </location>
    <ligand>
        <name>3-phosphoshikimate</name>
        <dbReference type="ChEBI" id="CHEBI:145989"/>
    </ligand>
</feature>
<feature type="binding site" evidence="1">
    <location>
        <position position="20"/>
    </location>
    <ligand>
        <name>phosphoenolpyruvate</name>
        <dbReference type="ChEBI" id="CHEBI:58702"/>
    </ligand>
</feature>
<feature type="binding site" evidence="1">
    <location>
        <position position="21"/>
    </location>
    <ligand>
        <name>3-phosphoshikimate</name>
        <dbReference type="ChEBI" id="CHEBI:145989"/>
    </ligand>
</feature>
<feature type="binding site" evidence="1">
    <location>
        <position position="25"/>
    </location>
    <ligand>
        <name>3-phosphoshikimate</name>
        <dbReference type="ChEBI" id="CHEBI:145989"/>
    </ligand>
</feature>
<feature type="binding site" evidence="1">
    <location>
        <position position="92"/>
    </location>
    <ligand>
        <name>phosphoenolpyruvate</name>
        <dbReference type="ChEBI" id="CHEBI:58702"/>
    </ligand>
</feature>
<feature type="binding site" evidence="1">
    <location>
        <position position="120"/>
    </location>
    <ligand>
        <name>phosphoenolpyruvate</name>
        <dbReference type="ChEBI" id="CHEBI:58702"/>
    </ligand>
</feature>
<feature type="binding site" evidence="1">
    <location>
        <position position="166"/>
    </location>
    <ligand>
        <name>3-phosphoshikimate</name>
        <dbReference type="ChEBI" id="CHEBI:145989"/>
    </ligand>
</feature>
<feature type="binding site" evidence="1">
    <location>
        <position position="168"/>
    </location>
    <ligand>
        <name>3-phosphoshikimate</name>
        <dbReference type="ChEBI" id="CHEBI:145989"/>
    </ligand>
</feature>
<feature type="binding site" evidence="1">
    <location>
        <position position="168"/>
    </location>
    <ligand>
        <name>phosphoenolpyruvate</name>
        <dbReference type="ChEBI" id="CHEBI:58702"/>
    </ligand>
</feature>
<feature type="binding site" evidence="1">
    <location>
        <position position="314"/>
    </location>
    <ligand>
        <name>3-phosphoshikimate</name>
        <dbReference type="ChEBI" id="CHEBI:145989"/>
    </ligand>
</feature>
<feature type="binding site" evidence="1">
    <location>
        <position position="341"/>
    </location>
    <ligand>
        <name>3-phosphoshikimate</name>
        <dbReference type="ChEBI" id="CHEBI:145989"/>
    </ligand>
</feature>
<feature type="binding site" evidence="1">
    <location>
        <position position="345"/>
    </location>
    <ligand>
        <name>phosphoenolpyruvate</name>
        <dbReference type="ChEBI" id="CHEBI:58702"/>
    </ligand>
</feature>
<feature type="binding site" evidence="1">
    <location>
        <position position="387"/>
    </location>
    <ligand>
        <name>phosphoenolpyruvate</name>
        <dbReference type="ChEBI" id="CHEBI:58702"/>
    </ligand>
</feature>
<dbReference type="EC" id="2.5.1.19" evidence="1"/>
<dbReference type="EMBL" id="AM263198">
    <property type="protein sequence ID" value="CAK21367.1"/>
    <property type="molecule type" value="Genomic_DNA"/>
</dbReference>
<dbReference type="RefSeq" id="WP_011702715.1">
    <property type="nucleotide sequence ID" value="NC_008555.1"/>
</dbReference>
<dbReference type="SMR" id="A0AK35"/>
<dbReference type="STRING" id="386043.lwe1949"/>
<dbReference type="GeneID" id="61189849"/>
<dbReference type="KEGG" id="lwe:lwe1949"/>
<dbReference type="eggNOG" id="COG0128">
    <property type="taxonomic scope" value="Bacteria"/>
</dbReference>
<dbReference type="HOGENOM" id="CLU_024321_0_1_9"/>
<dbReference type="OrthoDB" id="9809920at2"/>
<dbReference type="UniPathway" id="UPA00053">
    <property type="reaction ID" value="UER00089"/>
</dbReference>
<dbReference type="Proteomes" id="UP000000779">
    <property type="component" value="Chromosome"/>
</dbReference>
<dbReference type="GO" id="GO:0005737">
    <property type="term" value="C:cytoplasm"/>
    <property type="evidence" value="ECO:0007669"/>
    <property type="project" value="UniProtKB-SubCell"/>
</dbReference>
<dbReference type="GO" id="GO:0003866">
    <property type="term" value="F:3-phosphoshikimate 1-carboxyvinyltransferase activity"/>
    <property type="evidence" value="ECO:0007669"/>
    <property type="project" value="UniProtKB-UniRule"/>
</dbReference>
<dbReference type="GO" id="GO:0008652">
    <property type="term" value="P:amino acid biosynthetic process"/>
    <property type="evidence" value="ECO:0007669"/>
    <property type="project" value="UniProtKB-KW"/>
</dbReference>
<dbReference type="GO" id="GO:0009073">
    <property type="term" value="P:aromatic amino acid family biosynthetic process"/>
    <property type="evidence" value="ECO:0007669"/>
    <property type="project" value="UniProtKB-KW"/>
</dbReference>
<dbReference type="GO" id="GO:0009423">
    <property type="term" value="P:chorismate biosynthetic process"/>
    <property type="evidence" value="ECO:0007669"/>
    <property type="project" value="UniProtKB-UniRule"/>
</dbReference>
<dbReference type="CDD" id="cd01556">
    <property type="entry name" value="EPSP_synthase"/>
    <property type="match status" value="1"/>
</dbReference>
<dbReference type="FunFam" id="3.65.10.10:FF:000005">
    <property type="entry name" value="3-phosphoshikimate 1-carboxyvinyltransferase"/>
    <property type="match status" value="1"/>
</dbReference>
<dbReference type="FunFam" id="3.65.10.10:FF:000006">
    <property type="entry name" value="3-phosphoshikimate 1-carboxyvinyltransferase"/>
    <property type="match status" value="1"/>
</dbReference>
<dbReference type="Gene3D" id="3.65.10.10">
    <property type="entry name" value="Enolpyruvate transferase domain"/>
    <property type="match status" value="2"/>
</dbReference>
<dbReference type="HAMAP" id="MF_00210">
    <property type="entry name" value="EPSP_synth"/>
    <property type="match status" value="1"/>
</dbReference>
<dbReference type="InterPro" id="IPR001986">
    <property type="entry name" value="Enolpyruvate_Tfrase_dom"/>
</dbReference>
<dbReference type="InterPro" id="IPR036968">
    <property type="entry name" value="Enolpyruvate_Tfrase_sf"/>
</dbReference>
<dbReference type="InterPro" id="IPR006264">
    <property type="entry name" value="EPSP_synthase"/>
</dbReference>
<dbReference type="InterPro" id="IPR023193">
    <property type="entry name" value="EPSP_synthase_CS"/>
</dbReference>
<dbReference type="InterPro" id="IPR013792">
    <property type="entry name" value="RNA3'P_cycl/enolpyr_Trfase_a/b"/>
</dbReference>
<dbReference type="NCBIfam" id="TIGR01356">
    <property type="entry name" value="aroA"/>
    <property type="match status" value="1"/>
</dbReference>
<dbReference type="PANTHER" id="PTHR21090">
    <property type="entry name" value="AROM/DEHYDROQUINATE SYNTHASE"/>
    <property type="match status" value="1"/>
</dbReference>
<dbReference type="PANTHER" id="PTHR21090:SF5">
    <property type="entry name" value="PENTAFUNCTIONAL AROM POLYPEPTIDE"/>
    <property type="match status" value="1"/>
</dbReference>
<dbReference type="Pfam" id="PF00275">
    <property type="entry name" value="EPSP_synthase"/>
    <property type="match status" value="1"/>
</dbReference>
<dbReference type="PIRSF" id="PIRSF000505">
    <property type="entry name" value="EPSPS"/>
    <property type="match status" value="1"/>
</dbReference>
<dbReference type="SUPFAM" id="SSF55205">
    <property type="entry name" value="EPT/RTPC-like"/>
    <property type="match status" value="1"/>
</dbReference>
<dbReference type="PROSITE" id="PS00104">
    <property type="entry name" value="EPSP_SYNTHASE_1"/>
    <property type="match status" value="1"/>
</dbReference>
<dbReference type="PROSITE" id="PS00885">
    <property type="entry name" value="EPSP_SYNTHASE_2"/>
    <property type="match status" value="1"/>
</dbReference>
<proteinExistence type="inferred from homology"/>
<sequence>MKLITNKQGLVGNITVPGDKSMSHRSIMFGAIAEGKTVIRHFLRADDCLGTIKAFKALGVKIEETDEEIIVHGTGFDGLKQADGPLDIGNSGTTIRLMMGILAGRDFDTVILGDESIAKRPMNRVMLPLQEMGAKMHGKDGSEFAPITILGKQSLKRVEYHMPVASAQVKSAIIFAALQADGETIIHEKEKTRDHTEHMIRQFGGEIEMDGLTIRVKGGQKFIGQEMTVPGDVSSAAFFIVAGLIMPNSEIELTHVGLNPTRTGIFDVVEQMGGSLVVKDSSRSTGKLAGTVVVKSSELKGTEIGGDIIPRLIDEIPVIALLATQAEGTTIIKDAAELKVKETNRIDAVATELNKMGADITPTEDGLIIRGKTPLHAANVTSYGDHRIGMMLQIAALLVEDGDVELDRAEAVSVSYPTFFEDIRSLLK</sequence>
<name>AROA_LISW6</name>
<protein>
    <recommendedName>
        <fullName evidence="1">3-phosphoshikimate 1-carboxyvinyltransferase</fullName>
        <ecNumber evidence="1">2.5.1.19</ecNumber>
    </recommendedName>
    <alternativeName>
        <fullName evidence="1">5-enolpyruvylshikimate-3-phosphate synthase</fullName>
        <shortName evidence="1">EPSP synthase</shortName>
        <shortName evidence="1">EPSPS</shortName>
    </alternativeName>
</protein>
<organism>
    <name type="scientific">Listeria welshimeri serovar 6b (strain ATCC 35897 / DSM 20650 / CCUG 15529 / CIP 8149 / NCTC 11857 / SLCC 5334 / V8)</name>
    <dbReference type="NCBI Taxonomy" id="386043"/>
    <lineage>
        <taxon>Bacteria</taxon>
        <taxon>Bacillati</taxon>
        <taxon>Bacillota</taxon>
        <taxon>Bacilli</taxon>
        <taxon>Bacillales</taxon>
        <taxon>Listeriaceae</taxon>
        <taxon>Listeria</taxon>
    </lineage>
</organism>
<evidence type="ECO:0000255" key="1">
    <source>
        <dbReference type="HAMAP-Rule" id="MF_00210"/>
    </source>
</evidence>
<keyword id="KW-0028">Amino-acid biosynthesis</keyword>
<keyword id="KW-0057">Aromatic amino acid biosynthesis</keyword>
<keyword id="KW-0963">Cytoplasm</keyword>
<keyword id="KW-0808">Transferase</keyword>
<accession>A0AK35</accession>
<gene>
    <name evidence="1" type="primary">aroA</name>
    <name type="ordered locus">lwe1949</name>
</gene>